<dbReference type="EMBL" id="AM260479">
    <property type="protein sequence ID" value="CAJ94539.1"/>
    <property type="molecule type" value="Genomic_DNA"/>
</dbReference>
<dbReference type="RefSeq" id="WP_010812385.1">
    <property type="nucleotide sequence ID" value="NZ_CP039287.1"/>
</dbReference>
<dbReference type="SMR" id="Q0K632"/>
<dbReference type="STRING" id="381666.H16_A3471"/>
<dbReference type="GeneID" id="34310321"/>
<dbReference type="KEGG" id="reh:H16_A3471"/>
<dbReference type="eggNOG" id="COG0199">
    <property type="taxonomic scope" value="Bacteria"/>
</dbReference>
<dbReference type="HOGENOM" id="CLU_139869_0_1_4"/>
<dbReference type="OrthoDB" id="9810484at2"/>
<dbReference type="Proteomes" id="UP000008210">
    <property type="component" value="Chromosome 1"/>
</dbReference>
<dbReference type="GO" id="GO:0005737">
    <property type="term" value="C:cytoplasm"/>
    <property type="evidence" value="ECO:0007669"/>
    <property type="project" value="UniProtKB-ARBA"/>
</dbReference>
<dbReference type="GO" id="GO:0015935">
    <property type="term" value="C:small ribosomal subunit"/>
    <property type="evidence" value="ECO:0007669"/>
    <property type="project" value="TreeGrafter"/>
</dbReference>
<dbReference type="GO" id="GO:0019843">
    <property type="term" value="F:rRNA binding"/>
    <property type="evidence" value="ECO:0007669"/>
    <property type="project" value="UniProtKB-UniRule"/>
</dbReference>
<dbReference type="GO" id="GO:0003735">
    <property type="term" value="F:structural constituent of ribosome"/>
    <property type="evidence" value="ECO:0007669"/>
    <property type="project" value="InterPro"/>
</dbReference>
<dbReference type="GO" id="GO:0006412">
    <property type="term" value="P:translation"/>
    <property type="evidence" value="ECO:0007669"/>
    <property type="project" value="UniProtKB-UniRule"/>
</dbReference>
<dbReference type="FunFam" id="1.10.287.1480:FF:000001">
    <property type="entry name" value="30S ribosomal protein S14"/>
    <property type="match status" value="1"/>
</dbReference>
<dbReference type="Gene3D" id="1.10.287.1480">
    <property type="match status" value="1"/>
</dbReference>
<dbReference type="HAMAP" id="MF_00537">
    <property type="entry name" value="Ribosomal_uS14_1"/>
    <property type="match status" value="1"/>
</dbReference>
<dbReference type="InterPro" id="IPR001209">
    <property type="entry name" value="Ribosomal_uS14"/>
</dbReference>
<dbReference type="InterPro" id="IPR023036">
    <property type="entry name" value="Ribosomal_uS14_bac/plastid"/>
</dbReference>
<dbReference type="NCBIfam" id="NF006477">
    <property type="entry name" value="PRK08881.1"/>
    <property type="match status" value="1"/>
</dbReference>
<dbReference type="PANTHER" id="PTHR19836">
    <property type="entry name" value="30S RIBOSOMAL PROTEIN S14"/>
    <property type="match status" value="1"/>
</dbReference>
<dbReference type="PANTHER" id="PTHR19836:SF19">
    <property type="entry name" value="SMALL RIBOSOMAL SUBUNIT PROTEIN US14M"/>
    <property type="match status" value="1"/>
</dbReference>
<dbReference type="Pfam" id="PF00253">
    <property type="entry name" value="Ribosomal_S14"/>
    <property type="match status" value="1"/>
</dbReference>
<dbReference type="SUPFAM" id="SSF57716">
    <property type="entry name" value="Glucocorticoid receptor-like (DNA-binding domain)"/>
    <property type="match status" value="1"/>
</dbReference>
<keyword id="KW-1185">Reference proteome</keyword>
<keyword id="KW-0687">Ribonucleoprotein</keyword>
<keyword id="KW-0689">Ribosomal protein</keyword>
<keyword id="KW-0694">RNA-binding</keyword>
<keyword id="KW-0699">rRNA-binding</keyword>
<sequence>MAKLALIEREKKRAKLVAKYAAKRANLKAIIDDQEKSEEERYSARLELQQLPRNANPTRQRNRCAITGRPRGTFRKFGLARNKIREIAFKGEIPGLTKASW</sequence>
<organism>
    <name type="scientific">Cupriavidus necator (strain ATCC 17699 / DSM 428 / KCTC 22496 / NCIMB 10442 / H16 / Stanier 337)</name>
    <name type="common">Ralstonia eutropha</name>
    <dbReference type="NCBI Taxonomy" id="381666"/>
    <lineage>
        <taxon>Bacteria</taxon>
        <taxon>Pseudomonadati</taxon>
        <taxon>Pseudomonadota</taxon>
        <taxon>Betaproteobacteria</taxon>
        <taxon>Burkholderiales</taxon>
        <taxon>Burkholderiaceae</taxon>
        <taxon>Cupriavidus</taxon>
    </lineage>
</organism>
<name>RS14_CUPNH</name>
<accession>Q0K632</accession>
<reference key="1">
    <citation type="journal article" date="2006" name="Nat. Biotechnol.">
        <title>Genome sequence of the bioplastic-producing 'Knallgas' bacterium Ralstonia eutropha H16.</title>
        <authorList>
            <person name="Pohlmann A."/>
            <person name="Fricke W.F."/>
            <person name="Reinecke F."/>
            <person name="Kusian B."/>
            <person name="Liesegang H."/>
            <person name="Cramm R."/>
            <person name="Eitinger T."/>
            <person name="Ewering C."/>
            <person name="Poetter M."/>
            <person name="Schwartz E."/>
            <person name="Strittmatter A."/>
            <person name="Voss I."/>
            <person name="Gottschalk G."/>
            <person name="Steinbuechel A."/>
            <person name="Friedrich B."/>
            <person name="Bowien B."/>
        </authorList>
    </citation>
    <scope>NUCLEOTIDE SEQUENCE [LARGE SCALE GENOMIC DNA]</scope>
    <source>
        <strain>ATCC 17699 / DSM 428 / KCTC 22496 / NCIMB 10442 / H16 / Stanier 337</strain>
    </source>
</reference>
<protein>
    <recommendedName>
        <fullName evidence="1">Small ribosomal subunit protein uS14</fullName>
    </recommendedName>
    <alternativeName>
        <fullName evidence="2">30S ribosomal protein S14</fullName>
    </alternativeName>
</protein>
<feature type="chain" id="PRO_1000128528" description="Small ribosomal subunit protein uS14">
    <location>
        <begin position="1"/>
        <end position="101"/>
    </location>
</feature>
<proteinExistence type="inferred from homology"/>
<evidence type="ECO:0000255" key="1">
    <source>
        <dbReference type="HAMAP-Rule" id="MF_00537"/>
    </source>
</evidence>
<evidence type="ECO:0000305" key="2"/>
<gene>
    <name evidence="1" type="primary">rpsN</name>
    <name type="ordered locus">H16_A3471</name>
</gene>
<comment type="function">
    <text evidence="1">Binds 16S rRNA, required for the assembly of 30S particles and may also be responsible for determining the conformation of the 16S rRNA at the A site.</text>
</comment>
<comment type="subunit">
    <text evidence="1">Part of the 30S ribosomal subunit. Contacts proteins S3 and S10.</text>
</comment>
<comment type="similarity">
    <text evidence="1">Belongs to the universal ribosomal protein uS14 family.</text>
</comment>